<dbReference type="EC" id="2.1.1.61" evidence="1"/>
<dbReference type="EC" id="1.5.-.-" evidence="1"/>
<dbReference type="EMBL" id="AE004091">
    <property type="protein sequence ID" value="AAG06844.1"/>
    <property type="molecule type" value="Genomic_DNA"/>
</dbReference>
<dbReference type="PIR" id="G83213">
    <property type="entry name" value="G83213"/>
</dbReference>
<dbReference type="RefSeq" id="NP_252146.1">
    <property type="nucleotide sequence ID" value="NC_002516.2"/>
</dbReference>
<dbReference type="RefSeq" id="WP_003114497.1">
    <property type="nucleotide sequence ID" value="NZ_QZGE01000037.1"/>
</dbReference>
<dbReference type="SMR" id="Q9HYF0"/>
<dbReference type="FunCoup" id="Q9HYF0">
    <property type="interactions" value="115"/>
</dbReference>
<dbReference type="STRING" id="208964.PA3456"/>
<dbReference type="PaxDb" id="208964-PA3456"/>
<dbReference type="GeneID" id="877843"/>
<dbReference type="KEGG" id="pae:PA3456"/>
<dbReference type="PATRIC" id="fig|208964.12.peg.3618"/>
<dbReference type="PseudoCAP" id="PA3456"/>
<dbReference type="HOGENOM" id="CLU_022427_1_0_6"/>
<dbReference type="InParanoid" id="Q9HYF0"/>
<dbReference type="OrthoDB" id="9786494at2"/>
<dbReference type="PhylomeDB" id="Q9HYF0"/>
<dbReference type="BioCyc" id="PAER208964:G1FZ6-3524-MONOMER"/>
<dbReference type="Proteomes" id="UP000002438">
    <property type="component" value="Chromosome"/>
</dbReference>
<dbReference type="GO" id="GO:0005737">
    <property type="term" value="C:cytoplasm"/>
    <property type="evidence" value="ECO:0000318"/>
    <property type="project" value="GO_Central"/>
</dbReference>
<dbReference type="GO" id="GO:0050660">
    <property type="term" value="F:flavin adenine dinucleotide binding"/>
    <property type="evidence" value="ECO:0007669"/>
    <property type="project" value="UniProtKB-UniRule"/>
</dbReference>
<dbReference type="GO" id="GO:0016645">
    <property type="term" value="F:oxidoreductase activity, acting on the CH-NH group of donors"/>
    <property type="evidence" value="ECO:0007669"/>
    <property type="project" value="InterPro"/>
</dbReference>
<dbReference type="GO" id="GO:0004808">
    <property type="term" value="F:tRNA (5-methylaminomethyl-2-thiouridylate)(34)-methyltransferase activity"/>
    <property type="evidence" value="ECO:0000318"/>
    <property type="project" value="GO_Central"/>
</dbReference>
<dbReference type="GO" id="GO:0032259">
    <property type="term" value="P:methylation"/>
    <property type="evidence" value="ECO:0007669"/>
    <property type="project" value="UniProtKB-KW"/>
</dbReference>
<dbReference type="GO" id="GO:0002098">
    <property type="term" value="P:tRNA wobble uridine modification"/>
    <property type="evidence" value="ECO:0000318"/>
    <property type="project" value="GO_Central"/>
</dbReference>
<dbReference type="Gene3D" id="3.30.9.10">
    <property type="entry name" value="D-Amino Acid Oxidase, subunit A, domain 2"/>
    <property type="match status" value="1"/>
</dbReference>
<dbReference type="Gene3D" id="3.50.50.60">
    <property type="entry name" value="FAD/NAD(P)-binding domain"/>
    <property type="match status" value="1"/>
</dbReference>
<dbReference type="Gene3D" id="3.40.50.150">
    <property type="entry name" value="Vaccinia Virus protein VP39"/>
    <property type="match status" value="1"/>
</dbReference>
<dbReference type="HAMAP" id="MF_01102">
    <property type="entry name" value="MnmC"/>
    <property type="match status" value="1"/>
</dbReference>
<dbReference type="InterPro" id="IPR006076">
    <property type="entry name" value="FAD-dep_OxRdtase"/>
</dbReference>
<dbReference type="InterPro" id="IPR036188">
    <property type="entry name" value="FAD/NAD-bd_sf"/>
</dbReference>
<dbReference type="InterPro" id="IPR008471">
    <property type="entry name" value="MnmC-like_methylTransf"/>
</dbReference>
<dbReference type="InterPro" id="IPR029063">
    <property type="entry name" value="SAM-dependent_MTases_sf"/>
</dbReference>
<dbReference type="InterPro" id="IPR023032">
    <property type="entry name" value="tRNA_MAMT_biosynth_bifunc_MnmC"/>
</dbReference>
<dbReference type="InterPro" id="IPR047785">
    <property type="entry name" value="tRNA_MNMC2"/>
</dbReference>
<dbReference type="InterPro" id="IPR017610">
    <property type="entry name" value="tRNA_S-uridine_synth_MnmC_C"/>
</dbReference>
<dbReference type="NCBIfam" id="TIGR03197">
    <property type="entry name" value="MnmC_Cterm"/>
    <property type="match status" value="1"/>
</dbReference>
<dbReference type="NCBIfam" id="NF002481">
    <property type="entry name" value="PRK01747.1-2"/>
    <property type="match status" value="1"/>
</dbReference>
<dbReference type="NCBIfam" id="NF033855">
    <property type="entry name" value="tRNA_MNMC2"/>
    <property type="match status" value="1"/>
</dbReference>
<dbReference type="PANTHER" id="PTHR13847">
    <property type="entry name" value="SARCOSINE DEHYDROGENASE-RELATED"/>
    <property type="match status" value="1"/>
</dbReference>
<dbReference type="PANTHER" id="PTHR13847:SF283">
    <property type="entry name" value="TRNA 5-METHYLAMINOMETHYL-2-THIOURIDINE BIOSYNTHESIS BIFUNCTIONAL PROTEIN MNMC"/>
    <property type="match status" value="1"/>
</dbReference>
<dbReference type="Pfam" id="PF01266">
    <property type="entry name" value="DAO"/>
    <property type="match status" value="1"/>
</dbReference>
<dbReference type="Pfam" id="PF05430">
    <property type="entry name" value="Methyltransf_30"/>
    <property type="match status" value="1"/>
</dbReference>
<dbReference type="SUPFAM" id="SSF54373">
    <property type="entry name" value="FAD-linked reductases, C-terminal domain"/>
    <property type="match status" value="1"/>
</dbReference>
<dbReference type="SUPFAM" id="SSF51905">
    <property type="entry name" value="FAD/NAD(P)-binding domain"/>
    <property type="match status" value="1"/>
</dbReference>
<dbReference type="SUPFAM" id="SSF53335">
    <property type="entry name" value="S-adenosyl-L-methionine-dependent methyltransferases"/>
    <property type="match status" value="1"/>
</dbReference>
<sequence length="654" mass="70518">MSDFQHAQLDWDENGQPLSRAFGDVYFSRHSGLNETRHVFLATNRLAERFAALGDGEVLCIGETGFGTGLNFLCAWQLFERVAPAGARLEFVSVEKFPLAAADLRRALALWPELAPWSEALLGQYLAVHPGFQRLAFAGGRVGLTLLLGDALECLPQLDARVDAWFLDGFAPAKNPDMWSPVLFAELARLSAPQATLGTFTSAGFVRRGLVEAGFAMQRVPGYGQKREMLSGTYQGPPANAGKPWYARPAPHAGRRAALVVGGGLAGCASAASLAARGWQVTLIERHPGLAREASGNPQGVLYLKLSAHGTPLSRLVLSGFGHTRRLLERLRRGHDWDACGVLQLAFDAKEAQRQAQLAAAFPADLLHGLEREQAERLAGVALPAGGLFYPEAGWVHPPALCQALAATPGITLLSGRAVRLRREGDDWCAYAGDECLARAPLAILATAADIRDFPPAAELPLKRIRGQVTRLPATPQSRALRTVVCAEGYVAPPRGDEHTLGASFDFKSEDLAPTLAEHQGNLELLREISPDLLQRLGADDLPLERLEGRAAFRCTSPDYLPLVGPLAERAAFDEAYAVLARDARQVPERACPWLPGLYLNSGHGSRGLISAPLSGELLAAWICGEPLPLPRAVAEACHPNRFLLRDLVRGQRG</sequence>
<keyword id="KW-0963">Cytoplasm</keyword>
<keyword id="KW-0274">FAD</keyword>
<keyword id="KW-0285">Flavoprotein</keyword>
<keyword id="KW-0489">Methyltransferase</keyword>
<keyword id="KW-0511">Multifunctional enzyme</keyword>
<keyword id="KW-0560">Oxidoreductase</keyword>
<keyword id="KW-1185">Reference proteome</keyword>
<keyword id="KW-0949">S-adenosyl-L-methionine</keyword>
<keyword id="KW-0808">Transferase</keyword>
<keyword id="KW-0819">tRNA processing</keyword>
<feature type="chain" id="PRO_0000095021" description="tRNA 5-methylaminomethyl-2-thiouridine biosynthesis bifunctional protein MnmC">
    <location>
        <begin position="1"/>
        <end position="654"/>
    </location>
</feature>
<feature type="region of interest" description="tRNA (mnm(5)s(2)U34)-methyltransferase">
    <location>
        <begin position="1"/>
        <end position="235"/>
    </location>
</feature>
<feature type="region of interest" description="FAD-dependent cmnm(5)s(2)U34 oxidoreductase">
    <location>
        <begin position="261"/>
        <end position="654"/>
    </location>
</feature>
<accession>Q9HYF0</accession>
<evidence type="ECO:0000255" key="1">
    <source>
        <dbReference type="HAMAP-Rule" id="MF_01102"/>
    </source>
</evidence>
<reference key="1">
    <citation type="journal article" date="2000" name="Nature">
        <title>Complete genome sequence of Pseudomonas aeruginosa PAO1, an opportunistic pathogen.</title>
        <authorList>
            <person name="Stover C.K."/>
            <person name="Pham X.-Q.T."/>
            <person name="Erwin A.L."/>
            <person name="Mizoguchi S.D."/>
            <person name="Warrener P."/>
            <person name="Hickey M.J."/>
            <person name="Brinkman F.S.L."/>
            <person name="Hufnagle W.O."/>
            <person name="Kowalik D.J."/>
            <person name="Lagrou M."/>
            <person name="Garber R.L."/>
            <person name="Goltry L."/>
            <person name="Tolentino E."/>
            <person name="Westbrock-Wadman S."/>
            <person name="Yuan Y."/>
            <person name="Brody L.L."/>
            <person name="Coulter S.N."/>
            <person name="Folger K.R."/>
            <person name="Kas A."/>
            <person name="Larbig K."/>
            <person name="Lim R.M."/>
            <person name="Smith K.A."/>
            <person name="Spencer D.H."/>
            <person name="Wong G.K.-S."/>
            <person name="Wu Z."/>
            <person name="Paulsen I.T."/>
            <person name="Reizer J."/>
            <person name="Saier M.H. Jr."/>
            <person name="Hancock R.E.W."/>
            <person name="Lory S."/>
            <person name="Olson M.V."/>
        </authorList>
    </citation>
    <scope>NUCLEOTIDE SEQUENCE [LARGE SCALE GENOMIC DNA]</scope>
    <source>
        <strain>ATCC 15692 / DSM 22644 / CIP 104116 / JCM 14847 / LMG 12228 / 1C / PRS 101 / PAO1</strain>
    </source>
</reference>
<proteinExistence type="inferred from homology"/>
<organism>
    <name type="scientific">Pseudomonas aeruginosa (strain ATCC 15692 / DSM 22644 / CIP 104116 / JCM 14847 / LMG 12228 / 1C / PRS 101 / PAO1)</name>
    <dbReference type="NCBI Taxonomy" id="208964"/>
    <lineage>
        <taxon>Bacteria</taxon>
        <taxon>Pseudomonadati</taxon>
        <taxon>Pseudomonadota</taxon>
        <taxon>Gammaproteobacteria</taxon>
        <taxon>Pseudomonadales</taxon>
        <taxon>Pseudomonadaceae</taxon>
        <taxon>Pseudomonas</taxon>
    </lineage>
</organism>
<protein>
    <recommendedName>
        <fullName evidence="1">tRNA 5-methylaminomethyl-2-thiouridine biosynthesis bifunctional protein MnmC</fullName>
        <shortName evidence="1">tRNA mnm(5)s(2)U biosynthesis bifunctional protein</shortName>
    </recommendedName>
    <domain>
        <recommendedName>
            <fullName evidence="1">tRNA (mnm(5)s(2)U34)-methyltransferase</fullName>
            <ecNumber evidence="1">2.1.1.61</ecNumber>
        </recommendedName>
    </domain>
    <domain>
        <recommendedName>
            <fullName evidence="1">FAD-dependent cmnm(5)s(2)U34 oxidoreductase</fullName>
            <ecNumber evidence="1">1.5.-.-</ecNumber>
        </recommendedName>
    </domain>
</protein>
<name>MNMC_PSEAE</name>
<gene>
    <name evidence="1" type="primary">mnmC</name>
    <name type="ordered locus">PA3456</name>
</gene>
<comment type="function">
    <text evidence="1">Catalyzes the last two steps in the biosynthesis of 5-methylaminomethyl-2-thiouridine (mnm(5)s(2)U) at the wobble position (U34) in tRNA. Catalyzes the FAD-dependent demodification of cmnm(5)s(2)U34 to nm(5)s(2)U34, followed by the transfer of a methyl group from S-adenosyl-L-methionine to nm(5)s(2)U34, to form mnm(5)s(2)U34.</text>
</comment>
<comment type="catalytic activity">
    <reaction evidence="1">
        <text>5-aminomethyl-2-thiouridine(34) in tRNA + S-adenosyl-L-methionine = 5-methylaminomethyl-2-thiouridine(34) in tRNA + S-adenosyl-L-homocysteine + H(+)</text>
        <dbReference type="Rhea" id="RHEA:19569"/>
        <dbReference type="Rhea" id="RHEA-COMP:10195"/>
        <dbReference type="Rhea" id="RHEA-COMP:10197"/>
        <dbReference type="ChEBI" id="CHEBI:15378"/>
        <dbReference type="ChEBI" id="CHEBI:57856"/>
        <dbReference type="ChEBI" id="CHEBI:59789"/>
        <dbReference type="ChEBI" id="CHEBI:74454"/>
        <dbReference type="ChEBI" id="CHEBI:74455"/>
        <dbReference type="EC" id="2.1.1.61"/>
    </reaction>
</comment>
<comment type="cofactor">
    <cofactor evidence="1">
        <name>FAD</name>
        <dbReference type="ChEBI" id="CHEBI:57692"/>
    </cofactor>
</comment>
<comment type="subcellular location">
    <subcellularLocation>
        <location evidence="1">Cytoplasm</location>
    </subcellularLocation>
</comment>
<comment type="similarity">
    <text evidence="1">In the N-terminal section; belongs to the methyltransferase superfamily. tRNA (mnm(5)s(2)U34)-methyltransferase family.</text>
</comment>
<comment type="similarity">
    <text evidence="1">In the C-terminal section; belongs to the DAO family.</text>
</comment>